<sequence>MANYFNTLNLRQQLAQLGKCRFMGRDEFADGASYLQGKKVVIVGCGAQGLNQGLNMRDSGLDISYALRKEAIAEKRASWRKATENGFKVGTYEELIPQADLVVNLTPDKQHSDVVRSVQPLMKDGAALGYSHGFNIVEVGEQIRKDITVVMVAPKCPGTEVREEYKRGFGVPTLIAVHPENDPKGEGMAIAKAWAAATGGHRAGVLESSFVAEVKSDLMGEQTILCGMLQAGSLLCFDKLVAEGTDPAYAEKLIQFGWETITEALKQGGITLMMDRLSNPAKLRAYALSEQLKEIMAPLFQKHMDDIISGEFSSGMMADWANDDKKLLTWREETGKTAFETAPQFEGKIGEQEYFDKGVLMIAMVKAGVELAFETMVDSGIIEESAYYESLHELPLIANTIARKRLYEMNVVISDTAEYGNYLFSYACVPLLKPFMAELQPGDLGSAIPEGAVDNAQLRDVNDAIRSHAIEQVGKKLRGYMTDMKRIAVAG</sequence>
<proteinExistence type="inferred from homology"/>
<accession>B5BIS2</accession>
<name>ILVC_SALPK</name>
<organism>
    <name type="scientific">Salmonella paratyphi A (strain AKU_12601)</name>
    <dbReference type="NCBI Taxonomy" id="554290"/>
    <lineage>
        <taxon>Bacteria</taxon>
        <taxon>Pseudomonadati</taxon>
        <taxon>Pseudomonadota</taxon>
        <taxon>Gammaproteobacteria</taxon>
        <taxon>Enterobacterales</taxon>
        <taxon>Enterobacteriaceae</taxon>
        <taxon>Salmonella</taxon>
    </lineage>
</organism>
<reference key="1">
    <citation type="journal article" date="2009" name="BMC Genomics">
        <title>Pseudogene accumulation in the evolutionary histories of Salmonella enterica serovars Paratyphi A and Typhi.</title>
        <authorList>
            <person name="Holt K.E."/>
            <person name="Thomson N.R."/>
            <person name="Wain J."/>
            <person name="Langridge G.C."/>
            <person name="Hasan R."/>
            <person name="Bhutta Z.A."/>
            <person name="Quail M.A."/>
            <person name="Norbertczak H."/>
            <person name="Walker D."/>
            <person name="Simmonds M."/>
            <person name="White B."/>
            <person name="Bason N."/>
            <person name="Mungall K."/>
            <person name="Dougan G."/>
            <person name="Parkhill J."/>
        </authorList>
    </citation>
    <scope>NUCLEOTIDE SEQUENCE [LARGE SCALE GENOMIC DNA]</scope>
    <source>
        <strain>AKU_12601</strain>
    </source>
</reference>
<dbReference type="EC" id="1.1.1.86" evidence="1"/>
<dbReference type="EMBL" id="FM200053">
    <property type="protein sequence ID" value="CAR61770.1"/>
    <property type="molecule type" value="Genomic_DNA"/>
</dbReference>
<dbReference type="RefSeq" id="WP_000024943.1">
    <property type="nucleotide sequence ID" value="NC_011147.1"/>
</dbReference>
<dbReference type="SMR" id="B5BIS2"/>
<dbReference type="KEGG" id="sek:SSPA3493"/>
<dbReference type="HOGENOM" id="CLU_551905_0_0_6"/>
<dbReference type="UniPathway" id="UPA00047">
    <property type="reaction ID" value="UER00056"/>
</dbReference>
<dbReference type="UniPathway" id="UPA00049">
    <property type="reaction ID" value="UER00060"/>
</dbReference>
<dbReference type="Proteomes" id="UP000001869">
    <property type="component" value="Chromosome"/>
</dbReference>
<dbReference type="GO" id="GO:0005829">
    <property type="term" value="C:cytosol"/>
    <property type="evidence" value="ECO:0007669"/>
    <property type="project" value="TreeGrafter"/>
</dbReference>
<dbReference type="GO" id="GO:0004455">
    <property type="term" value="F:ketol-acid reductoisomerase activity"/>
    <property type="evidence" value="ECO:0007669"/>
    <property type="project" value="UniProtKB-UniRule"/>
</dbReference>
<dbReference type="GO" id="GO:0000287">
    <property type="term" value="F:magnesium ion binding"/>
    <property type="evidence" value="ECO:0007669"/>
    <property type="project" value="UniProtKB-UniRule"/>
</dbReference>
<dbReference type="GO" id="GO:0009097">
    <property type="term" value="P:isoleucine biosynthetic process"/>
    <property type="evidence" value="ECO:0007669"/>
    <property type="project" value="UniProtKB-UniRule"/>
</dbReference>
<dbReference type="GO" id="GO:0009099">
    <property type="term" value="P:L-valine biosynthetic process"/>
    <property type="evidence" value="ECO:0007669"/>
    <property type="project" value="UniProtKB-UniRule"/>
</dbReference>
<dbReference type="FunFam" id="1.10.1040.10:FF:000007">
    <property type="entry name" value="Ketol-acid reductoisomerase (NADP(+))"/>
    <property type="match status" value="1"/>
</dbReference>
<dbReference type="FunFam" id="3.40.50.720:FF:000043">
    <property type="entry name" value="Ketol-acid reductoisomerase (NADP(+))"/>
    <property type="match status" value="1"/>
</dbReference>
<dbReference type="Gene3D" id="1.10.1040.10">
    <property type="entry name" value="N-(1-d-carboxylethyl)-l-norvaline Dehydrogenase, domain 2"/>
    <property type="match status" value="1"/>
</dbReference>
<dbReference type="Gene3D" id="3.40.50.720">
    <property type="entry name" value="NAD(P)-binding Rossmann-like Domain"/>
    <property type="match status" value="1"/>
</dbReference>
<dbReference type="HAMAP" id="MF_00435">
    <property type="entry name" value="IlvC"/>
    <property type="match status" value="1"/>
</dbReference>
<dbReference type="InterPro" id="IPR008927">
    <property type="entry name" value="6-PGluconate_DH-like_C_sf"/>
</dbReference>
<dbReference type="InterPro" id="IPR013328">
    <property type="entry name" value="6PGD_dom2"/>
</dbReference>
<dbReference type="InterPro" id="IPR013023">
    <property type="entry name" value="KARI"/>
</dbReference>
<dbReference type="InterPro" id="IPR000506">
    <property type="entry name" value="KARI_C"/>
</dbReference>
<dbReference type="InterPro" id="IPR013116">
    <property type="entry name" value="KARI_N"/>
</dbReference>
<dbReference type="InterPro" id="IPR036291">
    <property type="entry name" value="NAD(P)-bd_dom_sf"/>
</dbReference>
<dbReference type="NCBIfam" id="TIGR00465">
    <property type="entry name" value="ilvC"/>
    <property type="match status" value="1"/>
</dbReference>
<dbReference type="NCBIfam" id="NF003557">
    <property type="entry name" value="PRK05225.1"/>
    <property type="match status" value="1"/>
</dbReference>
<dbReference type="PANTHER" id="PTHR21371">
    <property type="entry name" value="KETOL-ACID REDUCTOISOMERASE, MITOCHONDRIAL"/>
    <property type="match status" value="1"/>
</dbReference>
<dbReference type="PANTHER" id="PTHR21371:SF1">
    <property type="entry name" value="KETOL-ACID REDUCTOISOMERASE, MITOCHONDRIAL"/>
    <property type="match status" value="1"/>
</dbReference>
<dbReference type="Pfam" id="PF01450">
    <property type="entry name" value="KARI_C"/>
    <property type="match status" value="2"/>
</dbReference>
<dbReference type="Pfam" id="PF07991">
    <property type="entry name" value="KARI_N"/>
    <property type="match status" value="1"/>
</dbReference>
<dbReference type="SUPFAM" id="SSF48179">
    <property type="entry name" value="6-phosphogluconate dehydrogenase C-terminal domain-like"/>
    <property type="match status" value="2"/>
</dbReference>
<dbReference type="SUPFAM" id="SSF51735">
    <property type="entry name" value="NAD(P)-binding Rossmann-fold domains"/>
    <property type="match status" value="1"/>
</dbReference>
<dbReference type="PROSITE" id="PS51851">
    <property type="entry name" value="KARI_C"/>
    <property type="match status" value="2"/>
</dbReference>
<dbReference type="PROSITE" id="PS51850">
    <property type="entry name" value="KARI_N"/>
    <property type="match status" value="1"/>
</dbReference>
<keyword id="KW-0028">Amino-acid biosynthesis</keyword>
<keyword id="KW-0100">Branched-chain amino acid biosynthesis</keyword>
<keyword id="KW-0460">Magnesium</keyword>
<keyword id="KW-0479">Metal-binding</keyword>
<keyword id="KW-0521">NADP</keyword>
<keyword id="KW-0560">Oxidoreductase</keyword>
<keyword id="KW-0677">Repeat</keyword>
<gene>
    <name evidence="1" type="primary">ilvC</name>
    <name type="ordered locus">SSPA3493</name>
</gene>
<feature type="chain" id="PRO_1000190990" description="Ketol-acid reductoisomerase (NADP(+))">
    <location>
        <begin position="1"/>
        <end position="491"/>
    </location>
</feature>
<feature type="domain" description="KARI N-terminal Rossmann" evidence="2">
    <location>
        <begin position="15"/>
        <end position="208"/>
    </location>
</feature>
<feature type="domain" description="KARI C-terminal knotted 1" evidence="3">
    <location>
        <begin position="209"/>
        <end position="344"/>
    </location>
</feature>
<feature type="domain" description="KARI C-terminal knotted 2" evidence="3">
    <location>
        <begin position="345"/>
        <end position="484"/>
    </location>
</feature>
<feature type="active site" evidence="1">
    <location>
        <position position="132"/>
    </location>
</feature>
<feature type="binding site" evidence="1">
    <location>
        <begin position="45"/>
        <end position="48"/>
    </location>
    <ligand>
        <name>NADP(+)</name>
        <dbReference type="ChEBI" id="CHEBI:58349"/>
    </ligand>
</feature>
<feature type="binding site" evidence="1">
    <location>
        <position position="68"/>
    </location>
    <ligand>
        <name>NADP(+)</name>
        <dbReference type="ChEBI" id="CHEBI:58349"/>
    </ligand>
</feature>
<feature type="binding site" evidence="1">
    <location>
        <position position="76"/>
    </location>
    <ligand>
        <name>NADP(+)</name>
        <dbReference type="ChEBI" id="CHEBI:58349"/>
    </ligand>
</feature>
<feature type="binding site" evidence="1">
    <location>
        <position position="78"/>
    </location>
    <ligand>
        <name>NADP(+)</name>
        <dbReference type="ChEBI" id="CHEBI:58349"/>
    </ligand>
</feature>
<feature type="binding site" evidence="1">
    <location>
        <begin position="108"/>
        <end position="110"/>
    </location>
    <ligand>
        <name>NADP(+)</name>
        <dbReference type="ChEBI" id="CHEBI:58349"/>
    </ligand>
</feature>
<feature type="binding site" evidence="1">
    <location>
        <position position="158"/>
    </location>
    <ligand>
        <name>NADP(+)</name>
        <dbReference type="ChEBI" id="CHEBI:58349"/>
    </ligand>
</feature>
<feature type="binding site" evidence="1">
    <location>
        <position position="217"/>
    </location>
    <ligand>
        <name>Mg(2+)</name>
        <dbReference type="ChEBI" id="CHEBI:18420"/>
        <label>1</label>
    </ligand>
</feature>
<feature type="binding site" evidence="1">
    <location>
        <position position="217"/>
    </location>
    <ligand>
        <name>Mg(2+)</name>
        <dbReference type="ChEBI" id="CHEBI:18420"/>
        <label>2</label>
    </ligand>
</feature>
<feature type="binding site" evidence="1">
    <location>
        <position position="221"/>
    </location>
    <ligand>
        <name>Mg(2+)</name>
        <dbReference type="ChEBI" id="CHEBI:18420"/>
        <label>1</label>
    </ligand>
</feature>
<feature type="binding site" evidence="1">
    <location>
        <position position="389"/>
    </location>
    <ligand>
        <name>Mg(2+)</name>
        <dbReference type="ChEBI" id="CHEBI:18420"/>
        <label>2</label>
    </ligand>
</feature>
<feature type="binding site" evidence="1">
    <location>
        <position position="393"/>
    </location>
    <ligand>
        <name>Mg(2+)</name>
        <dbReference type="ChEBI" id="CHEBI:18420"/>
        <label>2</label>
    </ligand>
</feature>
<feature type="binding site" evidence="1">
    <location>
        <position position="414"/>
    </location>
    <ligand>
        <name>substrate</name>
    </ligand>
</feature>
<evidence type="ECO:0000255" key="1">
    <source>
        <dbReference type="HAMAP-Rule" id="MF_00435"/>
    </source>
</evidence>
<evidence type="ECO:0000255" key="2">
    <source>
        <dbReference type="PROSITE-ProRule" id="PRU01197"/>
    </source>
</evidence>
<evidence type="ECO:0000255" key="3">
    <source>
        <dbReference type="PROSITE-ProRule" id="PRU01198"/>
    </source>
</evidence>
<protein>
    <recommendedName>
        <fullName evidence="1">Ketol-acid reductoisomerase (NADP(+))</fullName>
        <shortName evidence="1">KARI</shortName>
        <ecNumber evidence="1">1.1.1.86</ecNumber>
    </recommendedName>
    <alternativeName>
        <fullName evidence="1">Acetohydroxy-acid isomeroreductase</fullName>
        <shortName evidence="1">AHIR</shortName>
    </alternativeName>
    <alternativeName>
        <fullName evidence="1">Alpha-keto-beta-hydroxylacyl reductoisomerase</fullName>
    </alternativeName>
    <alternativeName>
        <fullName evidence="1">Ketol-acid reductoisomerase type 2</fullName>
    </alternativeName>
    <alternativeName>
        <fullName evidence="1">Ketol-acid reductoisomerase type II</fullName>
    </alternativeName>
</protein>
<comment type="function">
    <text evidence="1">Involved in the biosynthesis of branched-chain amino acids (BCAA). Catalyzes an alkyl-migration followed by a ketol-acid reduction of (S)-2-acetolactate (S2AL) to yield (R)-2,3-dihydroxy-isovalerate. In the isomerase reaction, S2AL is rearranged via a Mg-dependent methyl migration to produce 3-hydroxy-3-methyl-2-ketobutyrate (HMKB). In the reductase reaction, this 2-ketoacid undergoes a metal-dependent reduction by NADPH to yield (R)-2,3-dihydroxy-isovalerate.</text>
</comment>
<comment type="catalytic activity">
    <reaction evidence="1">
        <text>(2R)-2,3-dihydroxy-3-methylbutanoate + NADP(+) = (2S)-2-acetolactate + NADPH + H(+)</text>
        <dbReference type="Rhea" id="RHEA:22068"/>
        <dbReference type="ChEBI" id="CHEBI:15378"/>
        <dbReference type="ChEBI" id="CHEBI:49072"/>
        <dbReference type="ChEBI" id="CHEBI:57783"/>
        <dbReference type="ChEBI" id="CHEBI:58349"/>
        <dbReference type="ChEBI" id="CHEBI:58476"/>
        <dbReference type="EC" id="1.1.1.86"/>
    </reaction>
</comment>
<comment type="catalytic activity">
    <reaction evidence="1">
        <text>(2R,3R)-2,3-dihydroxy-3-methylpentanoate + NADP(+) = (S)-2-ethyl-2-hydroxy-3-oxobutanoate + NADPH + H(+)</text>
        <dbReference type="Rhea" id="RHEA:13493"/>
        <dbReference type="ChEBI" id="CHEBI:15378"/>
        <dbReference type="ChEBI" id="CHEBI:49256"/>
        <dbReference type="ChEBI" id="CHEBI:49258"/>
        <dbReference type="ChEBI" id="CHEBI:57783"/>
        <dbReference type="ChEBI" id="CHEBI:58349"/>
        <dbReference type="EC" id="1.1.1.86"/>
    </reaction>
</comment>
<comment type="cofactor">
    <cofactor evidence="1">
        <name>Mg(2+)</name>
        <dbReference type="ChEBI" id="CHEBI:18420"/>
    </cofactor>
    <text evidence="1">Binds 2 magnesium ions per subunit.</text>
</comment>
<comment type="pathway">
    <text evidence="1">Amino-acid biosynthesis; L-isoleucine biosynthesis; L-isoleucine from 2-oxobutanoate: step 2/4.</text>
</comment>
<comment type="pathway">
    <text evidence="1">Amino-acid biosynthesis; L-valine biosynthesis; L-valine from pyruvate: step 2/4.</text>
</comment>
<comment type="similarity">
    <text evidence="1">Belongs to the ketol-acid reductoisomerase family.</text>
</comment>